<accession>K4C9E2</accession>
<accession>Q9FV32</accession>
<accession>Q9LWA6</accession>
<evidence type="ECO:0000255" key="1"/>
<evidence type="ECO:0000269" key="2">
    <source>
    </source>
</evidence>
<evidence type="ECO:0000269" key="3">
    <source>
    </source>
</evidence>
<evidence type="ECO:0000303" key="4">
    <source>
    </source>
</evidence>
<evidence type="ECO:0000303" key="5">
    <source>
    </source>
</evidence>
<evidence type="ECO:0000305" key="6"/>
<evidence type="ECO:0000305" key="7">
    <source>
    </source>
</evidence>
<evidence type="ECO:0000305" key="8">
    <source>
    </source>
</evidence>
<comment type="function">
    <text evidence="2 3">Involved in the synthesis of neoxanthin, the last product of carotenoid synthesis and a precursor of abscisic acid (PubMed:11029576). Involved in the beta-carotene biosynthesis (PubMed:10995464).</text>
</comment>
<comment type="catalytic activity">
    <reaction evidence="3">
        <text>all-trans-violaxanthin = all-trans-neoxanthin</text>
        <dbReference type="Rhea" id="RHEA:10128"/>
        <dbReference type="ChEBI" id="CHEBI:32446"/>
        <dbReference type="ChEBI" id="CHEBI:35288"/>
        <dbReference type="EC" id="5.3.99.9"/>
    </reaction>
</comment>
<comment type="catalytic activity">
    <reaction evidence="2">
        <text>a carotenoid psi-end group = a carotenoid beta-end derivative</text>
        <dbReference type="Rhea" id="RHEA:55620"/>
        <dbReference type="ChEBI" id="CHEBI:139114"/>
        <dbReference type="ChEBI" id="CHEBI:139120"/>
        <dbReference type="EC" id="5.5.1.19"/>
    </reaction>
</comment>
<comment type="pathway">
    <text evidence="6">Carotenoid biosynthesis; neoxanthin biosynthesis.</text>
</comment>
<comment type="pathway">
    <text evidence="6">Carotenoid biosynthesis; beta-carotene biosynthesis.</text>
</comment>
<comment type="subcellular location">
    <subcellularLocation>
        <location evidence="1 3">Plastid</location>
        <location evidence="1 3">Chloroplast</location>
    </subcellularLocation>
</comment>
<comment type="tissue specificity">
    <text evidence="2">Expressed exclusively in chromoplast-containing tissues of flowers and fruits (PubMed:10995464). Expressed in preanthesis flowers (PubMed:10995464).</text>
</comment>
<comment type="developmental stage">
    <text evidence="2">Expressed at the breaker stage during fruit ripening.</text>
</comment>
<comment type="similarity">
    <text evidence="6">Belongs to the lycopene cyclase family.</text>
</comment>
<comment type="caution">
    <text evidence="7 8">A unique gene in the tomato genome is described to encode for a protein with either a lycopene beta-cyclase activity or an exclusive neoxanthin synthase activity with no apparent lycopene beta-cyclase activity. According to a report, has lycopene beta-cyclase activity (PubMed:10995464). According to another report, displays exclusive neoxanthin synthase activity with no apparent lycopene beta-cyclase activity (PubMed:11029576). This discrepancy might be due to the differences in the cultivars used for the gene cloning and/or in the methods used to determine the enzymatic activities, in vitro assay or molecular analysis of mutants.</text>
</comment>
<name>NSY_SOLLC</name>
<protein>
    <recommendedName>
        <fullName evidence="5">Neoxanthin synthase, chloroplastic</fullName>
        <ecNumber evidence="3">5.3.99.9</ecNumber>
    </recommendedName>
    <alternativeName>
        <fullName evidence="4">Lycopene beta-cyclase</fullName>
        <ecNumber evidence="2">5.5.1.19</ecNumber>
    </alternativeName>
</protein>
<keyword id="KW-0150">Chloroplast</keyword>
<keyword id="KW-0413">Isomerase</keyword>
<keyword id="KW-0934">Plastid</keyword>
<keyword id="KW-1185">Reference proteome</keyword>
<keyword id="KW-0809">Transit peptide</keyword>
<sequence length="498" mass="56458">METLLKPFPSLLLSSPTPYRSIVQQNPSFLSPTTKKKSRKCLLRNKSSKLFCSFLDLAPTSKPESLDVNISWVDPNSNRAQFDVIIIGAGPAGLRLAEQVSKYGIKVCCVDPSPLSMWPNNYGVWVDEFENLGLEDCLDHKWPMTCVHINDNKTKYLGRPYGRVSRKKLKLKLLNSCVENRVKFYKAKVWKVEHEEFESSIVCDDGKKIRGSLVVDASGFASDFIEYDRPRNHGYQIAHGVLVEVDNHPFDLDKMVLMDWRDSHLGNEPYLRVNNAKEPTFLYAMPFDRDLVFLEETSLVSRPVLSYMEVKRRMVARLRHLGIKVKSVIEEEKCVIPMGGPLPRIPQNVMAIGGNSGIVHPSTGYMVARSMALAPVLAEAIVEGLGSTRMIRGSQLYHRVWNGLWPLDRRCVRECYSFGMETLLKLDLKGTRRLFDAFFDLDPKYWQGFLSSRLSVKELGLLSLCLFGHGSNMTRLDIVTKCPLPLVRLIGNLAIESL</sequence>
<reference key="1">
    <citation type="journal article" date="2000" name="Eur. J. Biochem.">
        <title>Identification of neoxanthin synthase as a carotenoid cyclase paralog.</title>
        <authorList>
            <person name="Bouvier F."/>
            <person name="D'harlingue A."/>
            <person name="Backhaus R.A."/>
            <person name="Kumagai M.H."/>
            <person name="Camara B."/>
        </authorList>
    </citation>
    <scope>NUCLEOTIDE SEQUENCE [MRNA]</scope>
    <scope>FUNCTION</scope>
    <scope>CATALYTIC ACTIVITY</scope>
    <scope>SUBCELLULAR LOCATION</scope>
</reference>
<reference key="2">
    <citation type="journal article" date="2000" name="Proc. Natl. Acad. Sci. U.S.A.">
        <title>An alternative pathway to beta -carotene formation in plant chromoplasts discovered by map-based cloning of beta and old-gold color mutations in tomato.</title>
        <authorList>
            <person name="Ronen G."/>
            <person name="Carmel-Goren L."/>
            <person name="Zamir D."/>
            <person name="Hirschberg J."/>
        </authorList>
    </citation>
    <scope>NUCLEOTIDE SEQUENCE [MRNA]</scope>
    <scope>FUNCTION</scope>
    <scope>CATALYTIC ACTIVITY</scope>
    <scope>TISSUE SPECIFICITY</scope>
    <scope>DEVELOPMENTAL STAGE</scope>
</reference>
<reference key="3">
    <citation type="journal article" date="2012" name="Nature">
        <title>The tomato genome sequence provides insights into fleshy fruit evolution.</title>
        <authorList>
            <consortium name="Tomato Genome Consortium"/>
        </authorList>
    </citation>
    <scope>NUCLEOTIDE SEQUENCE [LARGE SCALE GENOMIC DNA]</scope>
    <source>
        <strain>cv. Heinz 1706</strain>
    </source>
</reference>
<gene>
    <name evidence="5" type="primary">NSY</name>
    <name evidence="4" type="synonym">B</name>
    <name type="ordered locus">Solyc06g074240.1</name>
</gene>
<dbReference type="EC" id="5.3.99.9" evidence="3"/>
<dbReference type="EC" id="5.5.1.19" evidence="2"/>
<dbReference type="EMBL" id="Y18297">
    <property type="protein sequence ID" value="CAB93342.1"/>
    <property type="molecule type" value="mRNA"/>
</dbReference>
<dbReference type="EMBL" id="AF254793">
    <property type="protein sequence ID" value="AAG21133.1"/>
    <property type="molecule type" value="mRNA"/>
</dbReference>
<dbReference type="RefSeq" id="NP_001234445.2">
    <property type="nucleotide sequence ID" value="NM_001247516.2"/>
</dbReference>
<dbReference type="SMR" id="K4C9E2"/>
<dbReference type="STRING" id="4081.K4C9E2"/>
<dbReference type="PaxDb" id="4081-Solyc06g074240.1.1"/>
<dbReference type="GeneID" id="543649"/>
<dbReference type="KEGG" id="sly:543649"/>
<dbReference type="eggNOG" id="ENOG502QQD7">
    <property type="taxonomic scope" value="Eukaryota"/>
</dbReference>
<dbReference type="HOGENOM" id="CLU_032956_1_0_1"/>
<dbReference type="InParanoid" id="K4C9E2"/>
<dbReference type="OrthoDB" id="1716816at2759"/>
<dbReference type="PhylomeDB" id="K4C9E2"/>
<dbReference type="BioCyc" id="MetaCyc:MONOMER-12165"/>
<dbReference type="BRENDA" id="5.3.99.9">
    <property type="organism ID" value="3101"/>
</dbReference>
<dbReference type="UniPathway" id="UPA00388"/>
<dbReference type="UniPathway" id="UPA00802"/>
<dbReference type="Proteomes" id="UP000004994">
    <property type="component" value="Unplaced"/>
</dbReference>
<dbReference type="ExpressionAtlas" id="K4C9E2">
    <property type="expression patterns" value="baseline and differential"/>
</dbReference>
<dbReference type="GO" id="GO:0009507">
    <property type="term" value="C:chloroplast"/>
    <property type="evidence" value="ECO:0000314"/>
    <property type="project" value="UniProtKB"/>
</dbReference>
<dbReference type="GO" id="GO:0005739">
    <property type="term" value="C:mitochondrion"/>
    <property type="evidence" value="ECO:0000318"/>
    <property type="project" value="GO_Central"/>
</dbReference>
<dbReference type="GO" id="GO:0045436">
    <property type="term" value="F:lycopene beta cyclase activity"/>
    <property type="evidence" value="ECO:0000318"/>
    <property type="project" value="GO_Central"/>
</dbReference>
<dbReference type="GO" id="GO:0034020">
    <property type="term" value="F:neoxanthin synthase activity"/>
    <property type="evidence" value="ECO:0000314"/>
    <property type="project" value="UniProtKB"/>
</dbReference>
<dbReference type="GO" id="GO:0016491">
    <property type="term" value="F:oxidoreductase activity"/>
    <property type="evidence" value="ECO:0000318"/>
    <property type="project" value="GO_Central"/>
</dbReference>
<dbReference type="GO" id="GO:0016705">
    <property type="term" value="F:oxidoreductase activity, acting on paired donors, with incorporation or reduction of molecular oxygen"/>
    <property type="evidence" value="ECO:0007669"/>
    <property type="project" value="InterPro"/>
</dbReference>
<dbReference type="GO" id="GO:0016120">
    <property type="term" value="P:carotene biosynthetic process"/>
    <property type="evidence" value="ECO:0000318"/>
    <property type="project" value="GO_Central"/>
</dbReference>
<dbReference type="GO" id="GO:0006744">
    <property type="term" value="P:ubiquinone biosynthetic process"/>
    <property type="evidence" value="ECO:0000318"/>
    <property type="project" value="GO_Central"/>
</dbReference>
<dbReference type="GO" id="GO:0016123">
    <property type="term" value="P:xanthophyll biosynthetic process"/>
    <property type="evidence" value="ECO:0000314"/>
    <property type="project" value="UniProtKB"/>
</dbReference>
<dbReference type="FunFam" id="3.50.50.60:FF:000101">
    <property type="entry name" value="lycopene epsilon cyclase, chloroplastic"/>
    <property type="match status" value="1"/>
</dbReference>
<dbReference type="Gene3D" id="3.50.50.60">
    <property type="entry name" value="FAD/NAD(P)-binding domain"/>
    <property type="match status" value="1"/>
</dbReference>
<dbReference type="InterPro" id="IPR036188">
    <property type="entry name" value="FAD/NAD-bd_sf"/>
</dbReference>
<dbReference type="InterPro" id="IPR010108">
    <property type="entry name" value="Lycopene_cyclase_b/e"/>
</dbReference>
<dbReference type="NCBIfam" id="TIGR01790">
    <property type="entry name" value="carotene-cycl"/>
    <property type="match status" value="1"/>
</dbReference>
<dbReference type="PANTHER" id="PTHR39757">
    <property type="match status" value="1"/>
</dbReference>
<dbReference type="PANTHER" id="PTHR39757:SF9">
    <property type="entry name" value="CAPSANTHIN_CAPSORUBIN SYNTHASE, CHROMOPLAST PROTEIN"/>
    <property type="match status" value="1"/>
</dbReference>
<dbReference type="Pfam" id="PF05834">
    <property type="entry name" value="Lycopene_cycl"/>
    <property type="match status" value="1"/>
</dbReference>
<dbReference type="SUPFAM" id="SSF51905">
    <property type="entry name" value="FAD/NAD(P)-binding domain"/>
    <property type="match status" value="1"/>
</dbReference>
<feature type="transit peptide" description="Chloroplast" evidence="1">
    <location>
        <begin position="1"/>
        <end position="42"/>
    </location>
</feature>
<feature type="chain" id="PRO_0000435898" description="Neoxanthin synthase, chloroplastic" evidence="1">
    <location>
        <begin position="43"/>
        <end position="498"/>
    </location>
</feature>
<feature type="sequence conflict" description="In Ref. 2; AAG21133." evidence="6" ref="2">
    <original>T</original>
    <variation>A</variation>
    <location>
        <position position="3"/>
    </location>
</feature>
<feature type="sequence conflict" description="In Ref. 2; AAG21133." evidence="6" ref="2">
    <original>Y</original>
    <variation>H</variation>
    <location>
        <position position="19"/>
    </location>
</feature>
<feature type="sequence conflict" description="In Ref. 2; AAG21133." evidence="6" ref="2">
    <original>V</original>
    <variation>F</variation>
    <location>
        <position position="23"/>
    </location>
</feature>
<feature type="sequence conflict" description="In Ref. 2; AAG21133." evidence="6" ref="2">
    <original>D</original>
    <variation>N</variation>
    <location>
        <position position="136"/>
    </location>
</feature>
<feature type="sequence conflict" description="In Ref. 1; CAB93342." evidence="6" ref="1">
    <original>G</original>
    <variation>D</variation>
    <location>
        <position position="219"/>
    </location>
</feature>
<feature type="sequence conflict" description="In Ref. 1; CAB93342." evidence="6" ref="1">
    <original>I</original>
    <variation>M</variation>
    <location>
        <position position="490"/>
    </location>
</feature>
<organism>
    <name type="scientific">Solanum lycopersicum</name>
    <name type="common">Tomato</name>
    <name type="synonym">Lycopersicon esculentum</name>
    <dbReference type="NCBI Taxonomy" id="4081"/>
    <lineage>
        <taxon>Eukaryota</taxon>
        <taxon>Viridiplantae</taxon>
        <taxon>Streptophyta</taxon>
        <taxon>Embryophyta</taxon>
        <taxon>Tracheophyta</taxon>
        <taxon>Spermatophyta</taxon>
        <taxon>Magnoliopsida</taxon>
        <taxon>eudicotyledons</taxon>
        <taxon>Gunneridae</taxon>
        <taxon>Pentapetalae</taxon>
        <taxon>asterids</taxon>
        <taxon>lamiids</taxon>
        <taxon>Solanales</taxon>
        <taxon>Solanaceae</taxon>
        <taxon>Solanoideae</taxon>
        <taxon>Solaneae</taxon>
        <taxon>Solanum</taxon>
        <taxon>Solanum subgen. Lycopersicon</taxon>
    </lineage>
</organism>
<proteinExistence type="evidence at protein level"/>